<evidence type="ECO:0000255" key="1">
    <source>
        <dbReference type="HAMAP-Rule" id="MF_00065"/>
    </source>
</evidence>
<accession>A5G863</accession>
<comment type="function">
    <text evidence="1">Catalyzes the synthesis of activated sulfate.</text>
</comment>
<comment type="catalytic activity">
    <reaction evidence="1">
        <text>adenosine 5'-phosphosulfate + ATP = 3'-phosphoadenylyl sulfate + ADP + H(+)</text>
        <dbReference type="Rhea" id="RHEA:24152"/>
        <dbReference type="ChEBI" id="CHEBI:15378"/>
        <dbReference type="ChEBI" id="CHEBI:30616"/>
        <dbReference type="ChEBI" id="CHEBI:58243"/>
        <dbReference type="ChEBI" id="CHEBI:58339"/>
        <dbReference type="ChEBI" id="CHEBI:456216"/>
        <dbReference type="EC" id="2.7.1.25"/>
    </reaction>
</comment>
<comment type="pathway">
    <text evidence="1">Sulfur metabolism; hydrogen sulfide biosynthesis; sulfite from sulfate: step 2/3.</text>
</comment>
<comment type="similarity">
    <text evidence="1">Belongs to the APS kinase family.</text>
</comment>
<dbReference type="EC" id="2.7.1.25" evidence="1"/>
<dbReference type="EMBL" id="CP000698">
    <property type="protein sequence ID" value="ABQ27981.1"/>
    <property type="molecule type" value="Genomic_DNA"/>
</dbReference>
<dbReference type="RefSeq" id="WP_011940627.1">
    <property type="nucleotide sequence ID" value="NC_009483.1"/>
</dbReference>
<dbReference type="SMR" id="A5G863"/>
<dbReference type="STRING" id="351605.Gura_3831"/>
<dbReference type="KEGG" id="gur:Gura_3831"/>
<dbReference type="HOGENOM" id="CLU_046932_1_1_7"/>
<dbReference type="OrthoDB" id="9804504at2"/>
<dbReference type="UniPathway" id="UPA00140">
    <property type="reaction ID" value="UER00205"/>
</dbReference>
<dbReference type="Proteomes" id="UP000006695">
    <property type="component" value="Chromosome"/>
</dbReference>
<dbReference type="GO" id="GO:0004020">
    <property type="term" value="F:adenylylsulfate kinase activity"/>
    <property type="evidence" value="ECO:0007669"/>
    <property type="project" value="UniProtKB-UniRule"/>
</dbReference>
<dbReference type="GO" id="GO:0005524">
    <property type="term" value="F:ATP binding"/>
    <property type="evidence" value="ECO:0007669"/>
    <property type="project" value="UniProtKB-UniRule"/>
</dbReference>
<dbReference type="GO" id="GO:0070814">
    <property type="term" value="P:hydrogen sulfide biosynthetic process"/>
    <property type="evidence" value="ECO:0007669"/>
    <property type="project" value="UniProtKB-UniRule"/>
</dbReference>
<dbReference type="GO" id="GO:0000103">
    <property type="term" value="P:sulfate assimilation"/>
    <property type="evidence" value="ECO:0007669"/>
    <property type="project" value="UniProtKB-UniRule"/>
</dbReference>
<dbReference type="CDD" id="cd02027">
    <property type="entry name" value="APSK"/>
    <property type="match status" value="1"/>
</dbReference>
<dbReference type="FunFam" id="3.40.50.300:FF:000212">
    <property type="entry name" value="Adenylyl-sulfate kinase"/>
    <property type="match status" value="1"/>
</dbReference>
<dbReference type="Gene3D" id="3.40.50.300">
    <property type="entry name" value="P-loop containing nucleotide triphosphate hydrolases"/>
    <property type="match status" value="1"/>
</dbReference>
<dbReference type="HAMAP" id="MF_00065">
    <property type="entry name" value="Adenylyl_sulf_kinase"/>
    <property type="match status" value="1"/>
</dbReference>
<dbReference type="InterPro" id="IPR002891">
    <property type="entry name" value="APS_kinase"/>
</dbReference>
<dbReference type="InterPro" id="IPR027417">
    <property type="entry name" value="P-loop_NTPase"/>
</dbReference>
<dbReference type="NCBIfam" id="TIGR00455">
    <property type="entry name" value="apsK"/>
    <property type="match status" value="1"/>
</dbReference>
<dbReference type="NCBIfam" id="NF003013">
    <property type="entry name" value="PRK03846.1"/>
    <property type="match status" value="1"/>
</dbReference>
<dbReference type="PANTHER" id="PTHR11055">
    <property type="entry name" value="BIFUNCTIONAL 3'-PHOSPHOADENOSINE 5'-PHOSPHOSULFATE SYNTHASE"/>
    <property type="match status" value="1"/>
</dbReference>
<dbReference type="PANTHER" id="PTHR11055:SF1">
    <property type="entry name" value="PAPS SYNTHETASE, ISOFORM D"/>
    <property type="match status" value="1"/>
</dbReference>
<dbReference type="Pfam" id="PF01583">
    <property type="entry name" value="APS_kinase"/>
    <property type="match status" value="1"/>
</dbReference>
<dbReference type="SUPFAM" id="SSF52540">
    <property type="entry name" value="P-loop containing nucleoside triphosphate hydrolases"/>
    <property type="match status" value="1"/>
</dbReference>
<protein>
    <recommendedName>
        <fullName evidence="1">Adenylyl-sulfate kinase</fullName>
        <ecNumber evidence="1">2.7.1.25</ecNumber>
    </recommendedName>
    <alternativeName>
        <fullName evidence="1">APS kinase</fullName>
    </alternativeName>
    <alternativeName>
        <fullName evidence="1">ATP adenosine-5'-phosphosulfate 3'-phosphotransferase</fullName>
    </alternativeName>
    <alternativeName>
        <fullName evidence="1">Adenosine-5'-phosphosulfate kinase</fullName>
    </alternativeName>
</protein>
<keyword id="KW-0067">ATP-binding</keyword>
<keyword id="KW-0418">Kinase</keyword>
<keyword id="KW-0547">Nucleotide-binding</keyword>
<keyword id="KW-0597">Phosphoprotein</keyword>
<keyword id="KW-1185">Reference proteome</keyword>
<keyword id="KW-0808">Transferase</keyword>
<proteinExistence type="inferred from homology"/>
<sequence length="208" mass="23233">MAENGLNIVWHSRSLTKADYYDRNGHRPLVVWFTGLSGSGKSTLAHAAEEALFKKGCYTYILDGDNMRHGLNSDLGFSEADRRENIRRIGEVAKLFVDAGIVVLAAFISPYQEDRDRVRALFEPAEFIEIYVKCDLDTCESRDPKGLYRKARAGQLPQFTGIDSPYEEPQAPELVIDTCRLGVEESVAAIIRFVERRSADGGRLTADG</sequence>
<name>CYSC_GEOUR</name>
<gene>
    <name evidence="1" type="primary">cysC</name>
    <name type="ordered locus">Gura_3831</name>
</gene>
<organism>
    <name type="scientific">Geotalea uraniireducens (strain Rf4)</name>
    <name type="common">Geobacter uraniireducens</name>
    <dbReference type="NCBI Taxonomy" id="351605"/>
    <lineage>
        <taxon>Bacteria</taxon>
        <taxon>Pseudomonadati</taxon>
        <taxon>Thermodesulfobacteriota</taxon>
        <taxon>Desulfuromonadia</taxon>
        <taxon>Geobacterales</taxon>
        <taxon>Geobacteraceae</taxon>
        <taxon>Geotalea</taxon>
    </lineage>
</organism>
<reference key="1">
    <citation type="submission" date="2007-05" db="EMBL/GenBank/DDBJ databases">
        <title>Complete sequence of Geobacter uraniireducens Rf4.</title>
        <authorList>
            <consortium name="US DOE Joint Genome Institute"/>
            <person name="Copeland A."/>
            <person name="Lucas S."/>
            <person name="Lapidus A."/>
            <person name="Barry K."/>
            <person name="Detter J.C."/>
            <person name="Glavina del Rio T."/>
            <person name="Hammon N."/>
            <person name="Israni S."/>
            <person name="Dalin E."/>
            <person name="Tice H."/>
            <person name="Pitluck S."/>
            <person name="Chertkov O."/>
            <person name="Brettin T."/>
            <person name="Bruce D."/>
            <person name="Han C."/>
            <person name="Schmutz J."/>
            <person name="Larimer F."/>
            <person name="Land M."/>
            <person name="Hauser L."/>
            <person name="Kyrpides N."/>
            <person name="Mikhailova N."/>
            <person name="Shelobolina E."/>
            <person name="Aklujkar M."/>
            <person name="Lovley D."/>
            <person name="Richardson P."/>
        </authorList>
    </citation>
    <scope>NUCLEOTIDE SEQUENCE [LARGE SCALE GENOMIC DNA]</scope>
    <source>
        <strain>ATCC BAA-1134 / JCM 13001 / Rf4</strain>
    </source>
</reference>
<feature type="chain" id="PRO_1000116972" description="Adenylyl-sulfate kinase">
    <location>
        <begin position="1"/>
        <end position="208"/>
    </location>
</feature>
<feature type="active site" description="Phosphoserine intermediate" evidence="1">
    <location>
        <position position="109"/>
    </location>
</feature>
<feature type="binding site" evidence="1">
    <location>
        <begin position="35"/>
        <end position="42"/>
    </location>
    <ligand>
        <name>ATP</name>
        <dbReference type="ChEBI" id="CHEBI:30616"/>
    </ligand>
</feature>